<feature type="chain" id="PRO_0000182457" description="Heat-inducible transcription repressor HrcA">
    <location>
        <begin position="1"/>
        <end position="362"/>
    </location>
</feature>
<comment type="function">
    <text evidence="1">Negative regulator of class I heat shock genes (grpE-dnaK-dnaJ and groELS operons). Prevents heat-shock induction of these operons.</text>
</comment>
<comment type="similarity">
    <text evidence="1">Belongs to the HrcA family.</text>
</comment>
<proteinExistence type="inferred from homology"/>
<name>HRCA_BRADU</name>
<protein>
    <recommendedName>
        <fullName evidence="1">Heat-inducible transcription repressor HrcA</fullName>
    </recommendedName>
</protein>
<evidence type="ECO:0000255" key="1">
    <source>
        <dbReference type="HAMAP-Rule" id="MF_00081"/>
    </source>
</evidence>
<dbReference type="EMBL" id="Y09633">
    <property type="protein sequence ID" value="CAB60664.1"/>
    <property type="molecule type" value="Genomic_DNA"/>
</dbReference>
<dbReference type="EMBL" id="BA000040">
    <property type="protein sequence ID" value="BAC45940.1"/>
    <property type="molecule type" value="Genomic_DNA"/>
</dbReference>
<dbReference type="RefSeq" id="NP_767315.1">
    <property type="nucleotide sequence ID" value="NC_004463.1"/>
</dbReference>
<dbReference type="RefSeq" id="WP_011083502.1">
    <property type="nucleotide sequence ID" value="NC_004463.1"/>
</dbReference>
<dbReference type="SMR" id="Q9REF2"/>
<dbReference type="STRING" id="224911.AAV28_00210"/>
<dbReference type="EnsemblBacteria" id="BAC45940">
    <property type="protein sequence ID" value="BAC45940"/>
    <property type="gene ID" value="BAC45940"/>
</dbReference>
<dbReference type="GeneID" id="46487948"/>
<dbReference type="KEGG" id="bja:blr0675"/>
<dbReference type="PATRIC" id="fig|224911.44.peg.44"/>
<dbReference type="eggNOG" id="COG1420">
    <property type="taxonomic scope" value="Bacteria"/>
</dbReference>
<dbReference type="HOGENOM" id="CLU_050019_0_0_5"/>
<dbReference type="InParanoid" id="Q9REF2"/>
<dbReference type="OrthoDB" id="9783139at2"/>
<dbReference type="PhylomeDB" id="Q9REF2"/>
<dbReference type="Proteomes" id="UP000002526">
    <property type="component" value="Chromosome"/>
</dbReference>
<dbReference type="GO" id="GO:0003677">
    <property type="term" value="F:DNA binding"/>
    <property type="evidence" value="ECO:0007669"/>
    <property type="project" value="InterPro"/>
</dbReference>
<dbReference type="GO" id="GO:0045892">
    <property type="term" value="P:negative regulation of DNA-templated transcription"/>
    <property type="evidence" value="ECO:0000318"/>
    <property type="project" value="GO_Central"/>
</dbReference>
<dbReference type="Gene3D" id="3.30.450.40">
    <property type="match status" value="1"/>
</dbReference>
<dbReference type="Gene3D" id="3.30.390.60">
    <property type="entry name" value="Heat-inducible transcription repressor hrca homolog, domain 3"/>
    <property type="match status" value="1"/>
</dbReference>
<dbReference type="Gene3D" id="1.10.10.10">
    <property type="entry name" value="Winged helix-like DNA-binding domain superfamily/Winged helix DNA-binding domain"/>
    <property type="match status" value="1"/>
</dbReference>
<dbReference type="HAMAP" id="MF_00081">
    <property type="entry name" value="HrcA"/>
    <property type="match status" value="1"/>
</dbReference>
<dbReference type="InterPro" id="IPR029016">
    <property type="entry name" value="GAF-like_dom_sf"/>
</dbReference>
<dbReference type="InterPro" id="IPR002571">
    <property type="entry name" value="HrcA"/>
</dbReference>
<dbReference type="InterPro" id="IPR021153">
    <property type="entry name" value="HrcA_C"/>
</dbReference>
<dbReference type="InterPro" id="IPR036388">
    <property type="entry name" value="WH-like_DNA-bd_sf"/>
</dbReference>
<dbReference type="InterPro" id="IPR036390">
    <property type="entry name" value="WH_DNA-bd_sf"/>
</dbReference>
<dbReference type="InterPro" id="IPR023120">
    <property type="entry name" value="WHTH_transcript_rep_HrcA_IDD"/>
</dbReference>
<dbReference type="NCBIfam" id="TIGR00331">
    <property type="entry name" value="hrcA"/>
    <property type="match status" value="1"/>
</dbReference>
<dbReference type="PANTHER" id="PTHR34824">
    <property type="entry name" value="HEAT-INDUCIBLE TRANSCRIPTION REPRESSOR HRCA"/>
    <property type="match status" value="1"/>
</dbReference>
<dbReference type="PANTHER" id="PTHR34824:SF1">
    <property type="entry name" value="HEAT-INDUCIBLE TRANSCRIPTION REPRESSOR HRCA"/>
    <property type="match status" value="1"/>
</dbReference>
<dbReference type="Pfam" id="PF01628">
    <property type="entry name" value="HrcA"/>
    <property type="match status" value="1"/>
</dbReference>
<dbReference type="PIRSF" id="PIRSF005485">
    <property type="entry name" value="HrcA"/>
    <property type="match status" value="1"/>
</dbReference>
<dbReference type="SUPFAM" id="SSF55781">
    <property type="entry name" value="GAF domain-like"/>
    <property type="match status" value="1"/>
</dbReference>
<dbReference type="SUPFAM" id="SSF46785">
    <property type="entry name" value="Winged helix' DNA-binding domain"/>
    <property type="match status" value="1"/>
</dbReference>
<sequence length="362" mass="39166">MAHHDPIHLIAPRAGLAQLNERSRDIFRQIVESYLATGEPVGSRNISRLIAMPLSPASVRNVMADLEQLGLIYAPHTSAGRLPTELGLRFFVDALMQVGDLNDAERQSIQSQLTSVGQAQSVEAALDQALTRLSGLTRAAAVVLTPKSNARLKHIEFVRLEPEKALVILVGEDGQVENRVLTLPPGVPSSAITEAGNFLNSRIRGRTLAEARLELETALGEARAELDQLTQKVISAGIASWSGGENEDRQLIVRGHANLLEDLHALEDLERVRLLFDDLETKRGVIDLLGRAETAEGVRIFIGSENKLFSLSGSSTIISPYRDAAGHIVGVLGVIGPTRLNYARVIPTVDYAARIVSRLLGG</sequence>
<reference key="1">
    <citation type="journal article" date="2000" name="J. Bacteriol.">
        <title>Role of HrcA and CIRCE in the heat shock regulatory network of Bradyrhizobium japonicum.</title>
        <authorList>
            <person name="Minder A.C."/>
            <person name="Fischer H.-M."/>
            <person name="Hennecke H."/>
            <person name="Narberhaus F."/>
        </authorList>
    </citation>
    <scope>NUCLEOTIDE SEQUENCE [GENOMIC DNA]</scope>
    <source>
        <strain>USDA 110spc4</strain>
    </source>
</reference>
<reference key="2">
    <citation type="journal article" date="2002" name="DNA Res.">
        <title>Complete genomic sequence of nitrogen-fixing symbiotic bacterium Bradyrhizobium japonicum USDA110.</title>
        <authorList>
            <person name="Kaneko T."/>
            <person name="Nakamura Y."/>
            <person name="Sato S."/>
            <person name="Minamisawa K."/>
            <person name="Uchiumi T."/>
            <person name="Sasamoto S."/>
            <person name="Watanabe A."/>
            <person name="Idesawa K."/>
            <person name="Iriguchi M."/>
            <person name="Kawashima K."/>
            <person name="Kohara M."/>
            <person name="Matsumoto M."/>
            <person name="Shimpo S."/>
            <person name="Tsuruoka H."/>
            <person name="Wada T."/>
            <person name="Yamada M."/>
            <person name="Tabata S."/>
        </authorList>
    </citation>
    <scope>NUCLEOTIDE SEQUENCE [LARGE SCALE GENOMIC DNA]</scope>
    <source>
        <strain>JCM 10833 / BCRC 13528 / IAM 13628 / NBRC 14792 / USDA 110</strain>
    </source>
</reference>
<accession>Q9REF2</accession>
<organism>
    <name type="scientific">Bradyrhizobium diazoefficiens (strain JCM 10833 / BCRC 13528 / IAM 13628 / NBRC 14792 / USDA 110)</name>
    <dbReference type="NCBI Taxonomy" id="224911"/>
    <lineage>
        <taxon>Bacteria</taxon>
        <taxon>Pseudomonadati</taxon>
        <taxon>Pseudomonadota</taxon>
        <taxon>Alphaproteobacteria</taxon>
        <taxon>Hyphomicrobiales</taxon>
        <taxon>Nitrobacteraceae</taxon>
        <taxon>Bradyrhizobium</taxon>
    </lineage>
</organism>
<gene>
    <name evidence="1" type="primary">hrcA</name>
    <name type="ordered locus">blr0675</name>
</gene>
<keyword id="KW-1185">Reference proteome</keyword>
<keyword id="KW-0678">Repressor</keyword>
<keyword id="KW-0346">Stress response</keyword>
<keyword id="KW-0804">Transcription</keyword>
<keyword id="KW-0805">Transcription regulation</keyword>